<dbReference type="EC" id="2.3.1.-" evidence="8"/>
<dbReference type="EMBL" id="CDMC01000024">
    <property type="protein sequence ID" value="CEL11262.1"/>
    <property type="molecule type" value="Genomic_DNA"/>
</dbReference>
<dbReference type="SMR" id="A0A0U5GK88"/>
<dbReference type="STRING" id="454130.A0A0U5GK88"/>
<dbReference type="OMA" id="ITHESHD"/>
<dbReference type="OrthoDB" id="329835at2759"/>
<dbReference type="UniPathway" id="UPA00213"/>
<dbReference type="Proteomes" id="UP000054771">
    <property type="component" value="Unassembled WGS sequence"/>
</dbReference>
<dbReference type="GO" id="GO:0004312">
    <property type="term" value="F:fatty acid synthase activity"/>
    <property type="evidence" value="ECO:0007669"/>
    <property type="project" value="TreeGrafter"/>
</dbReference>
<dbReference type="GO" id="GO:0008168">
    <property type="term" value="F:methyltransferase activity"/>
    <property type="evidence" value="ECO:0007669"/>
    <property type="project" value="UniProtKB-KW"/>
</dbReference>
<dbReference type="GO" id="GO:0016491">
    <property type="term" value="F:oxidoreductase activity"/>
    <property type="evidence" value="ECO:0007669"/>
    <property type="project" value="UniProtKB-KW"/>
</dbReference>
<dbReference type="GO" id="GO:0031177">
    <property type="term" value="F:phosphopantetheine binding"/>
    <property type="evidence" value="ECO:0007669"/>
    <property type="project" value="InterPro"/>
</dbReference>
<dbReference type="GO" id="GO:0006633">
    <property type="term" value="P:fatty acid biosynthetic process"/>
    <property type="evidence" value="ECO:0007669"/>
    <property type="project" value="TreeGrafter"/>
</dbReference>
<dbReference type="GO" id="GO:0032259">
    <property type="term" value="P:methylation"/>
    <property type="evidence" value="ECO:0007669"/>
    <property type="project" value="UniProtKB-KW"/>
</dbReference>
<dbReference type="GO" id="GO:0044550">
    <property type="term" value="P:secondary metabolite biosynthetic process"/>
    <property type="evidence" value="ECO:0007669"/>
    <property type="project" value="TreeGrafter"/>
</dbReference>
<dbReference type="GO" id="GO:0016114">
    <property type="term" value="P:terpenoid biosynthetic process"/>
    <property type="evidence" value="ECO:0007669"/>
    <property type="project" value="UniProtKB-UniPathway"/>
</dbReference>
<dbReference type="CDD" id="cd05195">
    <property type="entry name" value="enoyl_red"/>
    <property type="match status" value="1"/>
</dbReference>
<dbReference type="CDD" id="cd00833">
    <property type="entry name" value="PKS"/>
    <property type="match status" value="1"/>
</dbReference>
<dbReference type="FunFam" id="3.40.47.10:FF:000019">
    <property type="entry name" value="Polyketide synthase type I"/>
    <property type="match status" value="1"/>
</dbReference>
<dbReference type="Gene3D" id="3.40.47.10">
    <property type="match status" value="1"/>
</dbReference>
<dbReference type="Gene3D" id="1.10.1200.10">
    <property type="entry name" value="ACP-like"/>
    <property type="match status" value="1"/>
</dbReference>
<dbReference type="Gene3D" id="3.40.366.10">
    <property type="entry name" value="Malonyl-Coenzyme A Acyl Carrier Protein, domain 2"/>
    <property type="match status" value="1"/>
</dbReference>
<dbReference type="Gene3D" id="3.90.180.10">
    <property type="entry name" value="Medium-chain alcohol dehydrogenases, catalytic domain"/>
    <property type="match status" value="1"/>
</dbReference>
<dbReference type="Gene3D" id="3.40.50.720">
    <property type="entry name" value="NAD(P)-binding Rossmann-like Domain"/>
    <property type="match status" value="2"/>
</dbReference>
<dbReference type="Gene3D" id="3.10.129.110">
    <property type="entry name" value="Polyketide synthase dehydratase"/>
    <property type="match status" value="1"/>
</dbReference>
<dbReference type="Gene3D" id="3.40.50.150">
    <property type="entry name" value="Vaccinia Virus protein VP39"/>
    <property type="match status" value="1"/>
</dbReference>
<dbReference type="InterPro" id="IPR001227">
    <property type="entry name" value="Ac_transferase_dom_sf"/>
</dbReference>
<dbReference type="InterPro" id="IPR036736">
    <property type="entry name" value="ACP-like_sf"/>
</dbReference>
<dbReference type="InterPro" id="IPR014043">
    <property type="entry name" value="Acyl_transferase_dom"/>
</dbReference>
<dbReference type="InterPro" id="IPR016035">
    <property type="entry name" value="Acyl_Trfase/lysoPLipase"/>
</dbReference>
<dbReference type="InterPro" id="IPR011032">
    <property type="entry name" value="GroES-like_sf"/>
</dbReference>
<dbReference type="InterPro" id="IPR014031">
    <property type="entry name" value="Ketoacyl_synth_C"/>
</dbReference>
<dbReference type="InterPro" id="IPR014030">
    <property type="entry name" value="Ketoacyl_synth_N"/>
</dbReference>
<dbReference type="InterPro" id="IPR016036">
    <property type="entry name" value="Malonyl_transacylase_ACP-bd"/>
</dbReference>
<dbReference type="InterPro" id="IPR013217">
    <property type="entry name" value="Methyltransf_12"/>
</dbReference>
<dbReference type="InterPro" id="IPR036291">
    <property type="entry name" value="NAD(P)-bd_dom_sf"/>
</dbReference>
<dbReference type="InterPro" id="IPR056501">
    <property type="entry name" value="NAD-bd_HRPKS_sdrA"/>
</dbReference>
<dbReference type="InterPro" id="IPR032821">
    <property type="entry name" value="PKS_assoc"/>
</dbReference>
<dbReference type="InterPro" id="IPR020841">
    <property type="entry name" value="PKS_Beta-ketoAc_synthase_dom"/>
</dbReference>
<dbReference type="InterPro" id="IPR042104">
    <property type="entry name" value="PKS_dehydratase_sf"/>
</dbReference>
<dbReference type="InterPro" id="IPR020807">
    <property type="entry name" value="PKS_DH"/>
</dbReference>
<dbReference type="InterPro" id="IPR049551">
    <property type="entry name" value="PKS_DH_C"/>
</dbReference>
<dbReference type="InterPro" id="IPR049552">
    <property type="entry name" value="PKS_DH_N"/>
</dbReference>
<dbReference type="InterPro" id="IPR020843">
    <property type="entry name" value="PKS_ER"/>
</dbReference>
<dbReference type="InterPro" id="IPR013968">
    <property type="entry name" value="PKS_KR"/>
</dbReference>
<dbReference type="InterPro" id="IPR049900">
    <property type="entry name" value="PKS_mFAS_DH"/>
</dbReference>
<dbReference type="InterPro" id="IPR050091">
    <property type="entry name" value="PKS_NRPS_Biosynth_Enz"/>
</dbReference>
<dbReference type="InterPro" id="IPR020806">
    <property type="entry name" value="PKS_PP-bd"/>
</dbReference>
<dbReference type="InterPro" id="IPR009081">
    <property type="entry name" value="PP-bd_ACP"/>
</dbReference>
<dbReference type="InterPro" id="IPR029063">
    <property type="entry name" value="SAM-dependent_MTases_sf"/>
</dbReference>
<dbReference type="InterPro" id="IPR016039">
    <property type="entry name" value="Thiolase-like"/>
</dbReference>
<dbReference type="PANTHER" id="PTHR43775:SF29">
    <property type="entry name" value="ASPERFURANONE POLYKETIDE SYNTHASE AFOG-RELATED"/>
    <property type="match status" value="1"/>
</dbReference>
<dbReference type="PANTHER" id="PTHR43775">
    <property type="entry name" value="FATTY ACID SYNTHASE"/>
    <property type="match status" value="1"/>
</dbReference>
<dbReference type="Pfam" id="PF23297">
    <property type="entry name" value="ACP_SdgA_C"/>
    <property type="match status" value="1"/>
</dbReference>
<dbReference type="Pfam" id="PF00698">
    <property type="entry name" value="Acyl_transf_1"/>
    <property type="match status" value="1"/>
</dbReference>
<dbReference type="Pfam" id="PF16197">
    <property type="entry name" value="KAsynt_C_assoc"/>
    <property type="match status" value="1"/>
</dbReference>
<dbReference type="Pfam" id="PF00109">
    <property type="entry name" value="ketoacyl-synt"/>
    <property type="match status" value="1"/>
</dbReference>
<dbReference type="Pfam" id="PF02801">
    <property type="entry name" value="Ketoacyl-synt_C"/>
    <property type="match status" value="1"/>
</dbReference>
<dbReference type="Pfam" id="PF08659">
    <property type="entry name" value="KR"/>
    <property type="match status" value="1"/>
</dbReference>
<dbReference type="Pfam" id="PF08242">
    <property type="entry name" value="Methyltransf_12"/>
    <property type="match status" value="1"/>
</dbReference>
<dbReference type="Pfam" id="PF23114">
    <property type="entry name" value="NAD-bd_HRPKS_sdrA"/>
    <property type="match status" value="1"/>
</dbReference>
<dbReference type="Pfam" id="PF21089">
    <property type="entry name" value="PKS_DH_N"/>
    <property type="match status" value="1"/>
</dbReference>
<dbReference type="Pfam" id="PF14765">
    <property type="entry name" value="PS-DH"/>
    <property type="match status" value="1"/>
</dbReference>
<dbReference type="SMART" id="SM00827">
    <property type="entry name" value="PKS_AT"/>
    <property type="match status" value="1"/>
</dbReference>
<dbReference type="SMART" id="SM00826">
    <property type="entry name" value="PKS_DH"/>
    <property type="match status" value="1"/>
</dbReference>
<dbReference type="SMART" id="SM00829">
    <property type="entry name" value="PKS_ER"/>
    <property type="match status" value="1"/>
</dbReference>
<dbReference type="SMART" id="SM00822">
    <property type="entry name" value="PKS_KR"/>
    <property type="match status" value="1"/>
</dbReference>
<dbReference type="SMART" id="SM00825">
    <property type="entry name" value="PKS_KS"/>
    <property type="match status" value="1"/>
</dbReference>
<dbReference type="SMART" id="SM00823">
    <property type="entry name" value="PKS_PP"/>
    <property type="match status" value="1"/>
</dbReference>
<dbReference type="SUPFAM" id="SSF47336">
    <property type="entry name" value="ACP-like"/>
    <property type="match status" value="1"/>
</dbReference>
<dbReference type="SUPFAM" id="SSF52151">
    <property type="entry name" value="FabD/lysophospholipase-like"/>
    <property type="match status" value="1"/>
</dbReference>
<dbReference type="SUPFAM" id="SSF50129">
    <property type="entry name" value="GroES-like"/>
    <property type="match status" value="1"/>
</dbReference>
<dbReference type="SUPFAM" id="SSF51735">
    <property type="entry name" value="NAD(P)-binding Rossmann-fold domains"/>
    <property type="match status" value="3"/>
</dbReference>
<dbReference type="SUPFAM" id="SSF55048">
    <property type="entry name" value="Probable ACP-binding domain of malonyl-CoA ACP transacylase"/>
    <property type="match status" value="1"/>
</dbReference>
<dbReference type="SUPFAM" id="SSF53335">
    <property type="entry name" value="S-adenosyl-L-methionine-dependent methyltransferases"/>
    <property type="match status" value="1"/>
</dbReference>
<dbReference type="SUPFAM" id="SSF53901">
    <property type="entry name" value="Thiolase-like"/>
    <property type="match status" value="1"/>
</dbReference>
<dbReference type="PROSITE" id="PS50075">
    <property type="entry name" value="CARRIER"/>
    <property type="match status" value="1"/>
</dbReference>
<dbReference type="PROSITE" id="PS52004">
    <property type="entry name" value="KS3_2"/>
    <property type="match status" value="1"/>
</dbReference>
<dbReference type="PROSITE" id="PS52019">
    <property type="entry name" value="PKS_MFAS_DH"/>
    <property type="match status" value="1"/>
</dbReference>
<gene>
    <name evidence="10" type="primary">ausV</name>
    <name type="ORF">ASPCAL14365</name>
</gene>
<comment type="function">
    <text evidence="1 8 9">Highly reducing polyketide synthase; part of the gene cluster that mediates the biosynthesis of calidodehydroaustin, a fungal meroterpenoid (PubMed:28233494, PubMed:29076725). The first step of the pathway is the synthesis of 3,5-dimethylorsellinic acid by the polyketide synthase ausA (PubMed:28233494). 3,5-dimethylorsellinic acid is then prenylated by the polyprenyl transferase ausN (PubMed:28233494). Further epoxidation by the FAD-dependent monooxygenase ausM and cyclization by the probable terpene cyclase ausL lead to the formation of protoaustinoid A (By similarity). Protoaustinoid A is then oxidized to spiro-lactone preaustinoid A3 by the combined action of the FAD-binding monooxygenases ausB and ausC, and the dioxygenase ausE (By similarity). Acid-catalyzed keto-rearrangement and ring contraction of the tetraketide portion of preaustinoid A3 by ausJ lead to the formation of preaustinoid A4 (By similarity). The aldo-keto reductase ausK, with the help of ausH, is involved in the next step by transforming preaustinoid A4 into isoaustinone which is in turn hydroxylated by the P450 monooxygenase ausI to form austinolide (By similarity). The cytochrome P450 monooxygenase ausG modifies austinolide to austinol (By similarity). Austinol is further acetylated to austin by the O-acetyltransferase ausP, which spontaneously changes to dehydroaustin (PubMed:28233494). The cytochrome P450 monooxygenase ausR then converts dehydroaustin is into 7-dehydrodehydroaustin (PubMed:28233494). The hydroxylation catalyzed by ausR permits the O-acetyltransferase ausQ to add an additional acetyl group to the molecule, leading to the formation of acetoxydehydroaustin (PubMed:28233494). The short chain dehydrogenase ausT catalyzes the reduction of the double bond present between carbon atoms 1 and 2 to convert 7-dehydrodehydroaustin into 1,2-dihydro-7-hydroxydehydroaustin (PubMed:28233494). AusQ catalyzes not only an acetylation reaction but also the addition of the PKS ausV diketide product to 1,2-dihydro-7-hydroxydehydroaustin, forming precalidodehydroaustin (PubMed:28233494). Finally, the iron/alpha-ketoglutarate-dependent dioxygenase converts precalidodehydroaustin into calidodehydroaustin (PubMed:28233494).</text>
</comment>
<comment type="pathway">
    <text evidence="8">Secondary metabolite biosynthesis; terpenoid biosynthesis.</text>
</comment>
<comment type="domain">
    <text evidence="2">Multidomain protein; including a ketosynthase (KS) that catalyzes repeated decarboxylative condensation to elongate the polyketide backbone; a malonyl-CoA:ACP transacylase (MAT) that selects and transfers the extender unit malonyl-CoA; a dehydratase (DH) domain that reduces hydroxyl groups to enoyl groups; a methyltransferase (CMeT) domain responsible for the incorporation of methyl groups; an enoylreductase (ER) domain that reduces enoyl groups to alkyl group; a ketoreductase (KR) domain that catalyzes beta-ketoreduction steps; and an acyl-carrier protein (ACP) that serves as the tether of the growing and completed polyketide via its phosphopantetheinyl arm.</text>
</comment>
<comment type="miscellaneous">
    <text evidence="11">In A.calidoustus, the austinoid gene cluster lies on a contiguous DNA region, while clusters from E.nidulans and P.brasilianum are split in their respective genomes. Genetic rearrangements provoked variability among the clusters and E.nidulans produces the least number of austionoid derivatives with the end products austinol and dehydroaustinol, while P.brasilianum can produce until acetoxydehydroaustin, and A.calidoustus produces the highest number of identified derivatives.</text>
</comment>
<reference key="1">
    <citation type="journal article" date="2016" name="Genome Announc.">
        <title>Draft genome sequences of fungus Aspergillus calidoustus.</title>
        <authorList>
            <person name="Horn F."/>
            <person name="Linde J."/>
            <person name="Mattern D.J."/>
            <person name="Walther G."/>
            <person name="Guthke R."/>
            <person name="Scherlach K."/>
            <person name="Martin K."/>
            <person name="Brakhage A.A."/>
            <person name="Petzke L."/>
            <person name="Valiante V."/>
        </authorList>
    </citation>
    <scope>NUCLEOTIDE SEQUENCE [LARGE SCALE GENOMIC DNA]</scope>
    <source>
        <strain>SF006504</strain>
    </source>
</reference>
<reference key="2">
    <citation type="journal article" date="2017" name="ACS Chem. Biol.">
        <title>Discovery of an Extended Austinoid Biosynthetic Pathway in Aspergillus calidoustus.</title>
        <authorList>
            <person name="Valiante V."/>
            <person name="Mattern D.J."/>
            <person name="Schueffler A."/>
            <person name="Horn F."/>
            <person name="Walther G."/>
            <person name="Scherlach K."/>
            <person name="Petzke L."/>
            <person name="Dickhaut J."/>
            <person name="Guthke R."/>
            <person name="Hertweck C."/>
            <person name="Nett M."/>
            <person name="Thines E."/>
            <person name="Brakhage A.A."/>
        </authorList>
    </citation>
    <scope>FUNCTION</scope>
    <scope>CATALYTIC ACTIVITY</scope>
    <scope>PATHWAY</scope>
</reference>
<reference key="3">
    <citation type="journal article" date="2017" name="ACS Chem. Biol.">
        <title>Rewiring of the austinoid biosynthetic pathway in filamentous fungi.</title>
        <authorList>
            <person name="Mattern D.J."/>
            <person name="Valiante V."/>
            <person name="Horn F."/>
            <person name="Petzke L."/>
            <person name="Brakhage A.A."/>
        </authorList>
    </citation>
    <scope>FUNCTION</scope>
</reference>
<organism>
    <name type="scientific">Aspergillus calidoustus</name>
    <dbReference type="NCBI Taxonomy" id="454130"/>
    <lineage>
        <taxon>Eukaryota</taxon>
        <taxon>Fungi</taxon>
        <taxon>Dikarya</taxon>
        <taxon>Ascomycota</taxon>
        <taxon>Pezizomycotina</taxon>
        <taxon>Eurotiomycetes</taxon>
        <taxon>Eurotiomycetidae</taxon>
        <taxon>Eurotiales</taxon>
        <taxon>Aspergillaceae</taxon>
        <taxon>Aspergillus</taxon>
        <taxon>Aspergillus subgen. Nidulantes</taxon>
    </lineage>
</organism>
<evidence type="ECO:0000250" key="1">
    <source>
        <dbReference type="UniProtKB" id="Q5ATJ7"/>
    </source>
</evidence>
<evidence type="ECO:0000250" key="2">
    <source>
        <dbReference type="UniProtKB" id="Q5KTM9"/>
    </source>
</evidence>
<evidence type="ECO:0000255" key="3"/>
<evidence type="ECO:0000255" key="4">
    <source>
        <dbReference type="PROSITE-ProRule" id="PRU00258"/>
    </source>
</evidence>
<evidence type="ECO:0000255" key="5">
    <source>
        <dbReference type="PROSITE-ProRule" id="PRU01348"/>
    </source>
</evidence>
<evidence type="ECO:0000255" key="6">
    <source>
        <dbReference type="PROSITE-ProRule" id="PRU01363"/>
    </source>
</evidence>
<evidence type="ECO:0000255" key="7">
    <source>
        <dbReference type="PROSITE-ProRule" id="PRU10022"/>
    </source>
</evidence>
<evidence type="ECO:0000269" key="8">
    <source>
    </source>
</evidence>
<evidence type="ECO:0000269" key="9">
    <source>
    </source>
</evidence>
<evidence type="ECO:0000303" key="10">
    <source>
    </source>
</evidence>
<evidence type="ECO:0000305" key="11">
    <source>
    </source>
</evidence>
<protein>
    <recommendedName>
        <fullName evidence="10">Highly reducing polyketide synthase ausV</fullName>
        <ecNumber evidence="8">2.3.1.-</ecNumber>
    </recommendedName>
    <alternativeName>
        <fullName evidence="10">Austinoid biosynthesis cluster protein V</fullName>
    </alternativeName>
</protein>
<sequence>MAGTDSSTPIAIIGLSGRFPGEASNPQKLWSVLMNKQSTRSEVPPDRFNVNAFYHPSGSRAGTVNTRWGHFMTRDPAAFDAPFFSVLPEEARAMDPQSRMALECAFEAFENAGMTMDAVAGTRTACYVASFTHDYAELLAQDGESQPRYKFTGCGAGMLANRISWFFDLQAPSVTVDTACSSSLVALHLGCQSIHTGDADMVLVGGANVILSPQMMASQSSLGFLSPDGRSKAFDEQADGYARGEGVGFLLLKPLGAALADGDAIRAVIRGTGVNQDGRTAGITVPSAQAQERLIRSVYDRACLDPVETPFVEAHGTGTRKGDLAEASSLASVFCHRRLPQNPLYIGSVKTNIGHLEAAAGVAQVIKTVLALENGIIPPNIWFTRPSTALPLDRWRLKVPVEPVSWPEGEKRRASINSFGYGGTNAHCVMETLEEYSMGQGAAKAGTLCQEPRCNHEARPREEEAPMLIFWSSHDKGGISRLAAQYAQYLEAKVKSATDRSSLTRRLCMTLHSRRSVMPWKSYIVSHSANSIVESFRNGAAQPLRSSEPPAIVFVFTGQGAQWPGMGRQLIRYPEYLESLQLAGRFLQCLGLQVSVIDEIKATPEQSSLASPEVSQTLCTVLQVALVDLLESFGINPTAVIGHSGGEIAAAYAKGAISREAAWTIAFHRGRLCSSLPDYAPSLQGGMLVAGLGREDCATYIGRLTEGVAVIACVNSPLSCTVAGDLSALDQLEGLLSEAGCFHRRLRVSRAYHSPHMQVIAGECYKAISSARPLADTEKSLNTTMYSTVTRGVVECSDLGPDYWVSNMIEPVEFVGAVESVIRDLGNRTAPTVFVEIGPHSALQGPLRQILDAASSAERFPYTSLLVRGRDAHHTLLESMGSLIQHGCHLKLHEINQLSTEEGFLVNLPPYPWNHDERNRYWAESSVSRKRRFRQHARHDLCGIRVEDDLPGEATWRNILSPSENPWILDHRVQGTIVYPAAGMLTAVVEAVRESVRNVLEISYFELRDVKISRPIVFSSEEDVVHTRLRLRQETGQCPGSFEFQHYSEKGDGWELNCSGSVLAGTPSDSPDAAHRTRYAHCRAASYVETTPRQAYSQWASVGLQFGRWFQNLTQLSKGPSSAIGTVRIPSTTDCMPCGFEQDMLVHPVVLDALVQLGLSTSKEEYEEPHDTMVPVAFSRVHISADIPQGPGTEMVGYSVINDSASGVNVAASDTQWAQPWIILDGLELATLSVRSGDAVGPTAARVPRKLAAATEWLPSIIHTPGDIIQRACNLPGESMQADRACELQWAALIWIQRILRGCPLTDVSPSPPHLRRLHHGMTRLYNSAIQGDSFPEDSRLKMLLSSPRKVQDEALQQVANSSIDGEILDHHCRMLDRILRGNMHSIEALLEESRLHRWYAEGITWRANHDKVSSYLRLHARNNAQAQILEIGGGTGGLTLSALRAMTLSDGSALFDSYCFTDISGGFFEKARKKFAAWAHCMSFVTLNIEHDLERQGFGEAQFDLILADNVLHATKSIRHTLSAVRKLLKPTGRLVLSEITRNMPHITMTVGALEGWWLGVEDGRVWEPTLSVEQWDGALRDTGFSGVDISLHDRPKGDHIMTGMVATARQLGLTPPPTPAVIIIHMHNLTPRVRTFVTGCITQLRALGMDVAVESLGSSSAHDNLHDKTVVLLLDADPEQRDLATINETEWTALKHTLLSCADAVWITRGANADGWNPWASMAQGLVRSLRAENPATAITMVDIACEQDLDSATTISSITRLALAGRRAKITHESHDWEYCIRGREILIPRVMTEDGVNGAVFKSVKSETEQIPFGQPGTSVALTTIEPLRFVQDPAYWLEPLGKDEAEVATRATHLVSSQGQNNSSHGLVTVCGTVTRLGTACHSELSVGDRVMTIQRGAIRNLYRCPLTLCHRIPEKLGDFGVAVRVLWAYTTAFYCLVHKASLKAGEAVLIDCASNTLQESLIRLAQHARAEVFLLVSSEARKNQLASTFLVPPDHILSTGGEGLQGLDMGRRFDLILLDAAPTNLLQQYLAPGARLVLVQHQGRTQHSSFHGSNGSVDRHESWFLDSKGTRLRLPIPGDARMYTIAPDTLSHEDRTIVAQILRHVTELVRSQEIHADSGGAKPGCSRSEESLHITNCVEGAPNQLVVEAHGRALVPDFHNKVIKSRPTAHLLPNATYIIAGGSGGLGASLARWMCHRGARHIVILSRQADTRPGVAKLIEDLAVNGVKVAAVPCDITDSQQDSVFHNMSFGAWNRAIHPKVMGSWNLHTHCPSEVDFFILLSSFVGTVGLRGQANYAAGNSFQDALAHHRRSRGQAGVSLSLGFIDGAGFIAQSSGRVAENVSKFNFLHIQQSEFLQLVELAVTSPDRLPAQVITGCGTGGMVAAREGDPGDVYWLRDPRFQLLAQVDLHHFQRMNSEPAAEGFSLGALLAAAETVGAAATAVLDALCRKLATAASIEAGDIDTSRQLSSYGVDSLLAVDLRAYLATEARLDISVFELMRSRPMRELARDLALRSKYFRSSHVAT</sequence>
<feature type="chain" id="PRO_0000453870" description="Highly reducing polyketide synthase ausV">
    <location>
        <begin position="1"/>
        <end position="2531"/>
    </location>
</feature>
<feature type="domain" description="Ketosynthase family 3 (KS3)" evidence="5">
    <location>
        <begin position="7"/>
        <end position="432"/>
    </location>
</feature>
<feature type="domain" description="PKS/mFAS DH" evidence="6">
    <location>
        <begin position="939"/>
        <end position="1238"/>
    </location>
</feature>
<feature type="domain" description="Carrier" evidence="4">
    <location>
        <begin position="2444"/>
        <end position="2521"/>
    </location>
</feature>
<feature type="region of interest" description="Malonyl-CoA:ACP transacylase (MAT) domain" evidence="2 3">
    <location>
        <begin position="554"/>
        <end position="882"/>
    </location>
</feature>
<feature type="region of interest" description="N-terminal hotdog fold" evidence="6">
    <location>
        <begin position="939"/>
        <end position="1069"/>
    </location>
</feature>
<feature type="region of interest" description="Dehydratase (DH) domain" evidence="2 3">
    <location>
        <begin position="940"/>
        <end position="1236"/>
    </location>
</feature>
<feature type="region of interest" description="C-terminal hotdog fold" evidence="6">
    <location>
        <begin position="1087"/>
        <end position="1238"/>
    </location>
</feature>
<feature type="region of interest" description="Methyltransferase (CMet) domain" evidence="2 3">
    <location>
        <begin position="1414"/>
        <end position="1592"/>
    </location>
</feature>
<feature type="region of interest" description="Enoyl reductase (ER) domain" evidence="2 3">
    <location>
        <begin position="1832"/>
        <end position="2133"/>
    </location>
</feature>
<feature type="region of interest" description="Ketoreductase (KR) domain" evidence="2 3">
    <location>
        <begin position="2156"/>
        <end position="2331"/>
    </location>
</feature>
<feature type="active site" description="For beta-ketoacyl synthase activity" evidence="5">
    <location>
        <position position="180"/>
    </location>
</feature>
<feature type="active site" description="For beta-ketoacyl synthase activity" evidence="5">
    <location>
        <position position="315"/>
    </location>
</feature>
<feature type="active site" description="For beta-ketoacyl synthase activity" evidence="5">
    <location>
        <position position="355"/>
    </location>
</feature>
<feature type="active site" description="For malonyltransferase activity" evidence="7">
    <location>
        <position position="644"/>
    </location>
</feature>
<feature type="active site" description="Proton acceptor; for dehydratase activity" evidence="6">
    <location>
        <position position="971"/>
    </location>
</feature>
<feature type="active site" description="Proton donor; for dehydratase activity" evidence="6">
    <location>
        <position position="1152"/>
    </location>
</feature>
<feature type="modified residue" description="O-(pantetheine 4'-phosphoryl)serine" evidence="4">
    <location>
        <position position="2481"/>
    </location>
</feature>
<accession>A0A0U5GK88</accession>
<name>AUSV_ASPCI</name>
<keyword id="KW-0012">Acyltransferase</keyword>
<keyword id="KW-0489">Methyltransferase</keyword>
<keyword id="KW-0511">Multifunctional enzyme</keyword>
<keyword id="KW-0521">NADP</keyword>
<keyword id="KW-0560">Oxidoreductase</keyword>
<keyword id="KW-0596">Phosphopantetheine</keyword>
<keyword id="KW-0597">Phosphoprotein</keyword>
<keyword id="KW-1185">Reference proteome</keyword>
<keyword id="KW-0949">S-adenosyl-L-methionine</keyword>
<keyword id="KW-0808">Transferase</keyword>
<proteinExistence type="evidence at protein level"/>